<feature type="chain" id="PRO_0000161570" description="Carboxymethylenebutenolidase">
    <location>
        <begin position="1"/>
        <end position="236"/>
    </location>
</feature>
<feature type="active site">
    <location>
        <position position="123"/>
    </location>
</feature>
<feature type="active site">
    <location>
        <position position="171"/>
    </location>
</feature>
<feature type="active site">
    <location>
        <position position="202"/>
    </location>
</feature>
<feature type="strand" evidence="2">
    <location>
        <begin position="18"/>
        <end position="21"/>
    </location>
</feature>
<feature type="strand" evidence="2">
    <location>
        <begin position="27"/>
        <end position="34"/>
    </location>
</feature>
<feature type="helix" evidence="2">
    <location>
        <begin position="42"/>
        <end position="53"/>
    </location>
</feature>
<feature type="strand" evidence="2">
    <location>
        <begin position="57"/>
        <end position="61"/>
    </location>
</feature>
<feature type="helix" evidence="2">
    <location>
        <begin position="63"/>
        <end position="66"/>
    </location>
</feature>
<feature type="helix" evidence="2">
    <location>
        <begin position="78"/>
        <end position="90"/>
    </location>
</feature>
<feature type="helix" evidence="2">
    <location>
        <begin position="93"/>
        <end position="107"/>
    </location>
</feature>
<feature type="strand" evidence="2">
    <location>
        <begin position="113"/>
        <end position="122"/>
    </location>
</feature>
<feature type="helix" evidence="2">
    <location>
        <begin position="124"/>
        <end position="134"/>
    </location>
</feature>
<feature type="strand" evidence="2">
    <location>
        <begin position="138"/>
        <end position="145"/>
    </location>
</feature>
<feature type="helix" evidence="2">
    <location>
        <begin position="149"/>
        <end position="151"/>
    </location>
</feature>
<feature type="helix" evidence="2">
    <location>
        <begin position="153"/>
        <end position="158"/>
    </location>
</feature>
<feature type="strand" evidence="2">
    <location>
        <begin position="163"/>
        <end position="168"/>
    </location>
</feature>
<feature type="strand" evidence="3">
    <location>
        <begin position="172"/>
        <end position="174"/>
    </location>
</feature>
<feature type="helix" evidence="2">
    <location>
        <begin position="176"/>
        <end position="186"/>
    </location>
</feature>
<feature type="strand" evidence="2">
    <location>
        <begin position="192"/>
        <end position="197"/>
    </location>
</feature>
<feature type="turn" evidence="2">
    <location>
        <begin position="202"/>
        <end position="205"/>
    </location>
</feature>
<feature type="helix" evidence="2">
    <location>
        <begin position="214"/>
        <end position="228"/>
    </location>
</feature>
<feature type="helix" evidence="2">
    <location>
        <begin position="229"/>
        <end position="231"/>
    </location>
</feature>
<proteinExistence type="evidence at protein level"/>
<gene>
    <name type="primary">clcD</name>
</gene>
<sequence>MLTEGISIQSYDGHTFGALVGSPAKAPAPVIVIAQEIFGVNAFMRETVSWLVDQGYAAVCPDLYARQAPGTALDPQDERQREQAYKLWQAFDMEAGVGDLEAAIRYARHQPYSNGKVGLVGYCLGGALAFLVAAKGYVDRAVGYYGVGLEKQLKKVPEVKHPALFHMGGQDHFVPAPSRQLITEGFGANPLLQVHWYEEAGHSFARTSSSGYVASAAALANERRLDFLAPLQSKKP</sequence>
<reference key="1">
    <citation type="journal article" date="1987" name="Proc. Natl. Acad. Sci. U.S.A.">
        <title>Organization and nucleotide sequence determination of a gene cluster involved in 3-chlorocatechol degradation.</title>
        <authorList>
            <person name="Frantz B."/>
            <person name="Chakrabarty A.M."/>
        </authorList>
    </citation>
    <scope>NUCLEOTIDE SEQUENCE [GENOMIC DNA]</scope>
    <source>
        <strain>AC859</strain>
    </source>
</reference>
<geneLocation type="plasmid">
    <name>pAC27</name>
</geneLocation>
<keyword id="KW-0002">3D-structure</keyword>
<keyword id="KW-0058">Aromatic hydrocarbons catabolism</keyword>
<keyword id="KW-0378">Hydrolase</keyword>
<keyword id="KW-0614">Plasmid</keyword>
<keyword id="KW-0719">Serine esterase</keyword>
<accession>P0A114</accession>
<accession>P11453</accession>
<name>CLCD_PSEPU</name>
<protein>
    <recommendedName>
        <fullName>Carboxymethylenebutenolidase</fullName>
        <ecNumber>3.1.1.45</ecNumber>
    </recommendedName>
    <alternativeName>
        <fullName>Dienelactone hydrolase</fullName>
        <shortName>DLH</shortName>
    </alternativeName>
</protein>
<comment type="function">
    <text>Ring cleavage of cyclic ester dienelactone to produce maleylacetate.</text>
</comment>
<comment type="catalytic activity">
    <reaction>
        <text>2-(5-oxo-2,5-dihydrofuran-2-ylidene)acetate + H2O = 4-oxohex-2-enedioate + H(+)</text>
        <dbReference type="Rhea" id="RHEA:12372"/>
        <dbReference type="ChEBI" id="CHEBI:12040"/>
        <dbReference type="ChEBI" id="CHEBI:15377"/>
        <dbReference type="ChEBI" id="CHEBI:15378"/>
        <dbReference type="ChEBI" id="CHEBI:57263"/>
        <dbReference type="EC" id="3.1.1.45"/>
    </reaction>
</comment>
<comment type="pathway">
    <text>Aromatic compound metabolism; 3-chlorocatechol degradation.</text>
</comment>
<comment type="subunit">
    <text>Monomer.</text>
</comment>
<comment type="miscellaneous">
    <text>Carboxymethylenebutenolidase is specific for dienelactone and has no activity toward enol-lactones.</text>
</comment>
<comment type="similarity">
    <text evidence="1">Belongs to the dienelactone hydrolase family.</text>
</comment>
<evidence type="ECO:0000305" key="1"/>
<evidence type="ECO:0007829" key="2">
    <source>
        <dbReference type="PDB" id="1ZI8"/>
    </source>
</evidence>
<evidence type="ECO:0007829" key="3">
    <source>
        <dbReference type="PDB" id="1ZJ4"/>
    </source>
</evidence>
<dbReference type="EC" id="3.1.1.45"/>
<dbReference type="EMBL" id="M16964">
    <property type="protein sequence ID" value="AAA98284.1"/>
    <property type="molecule type" value="Genomic_DNA"/>
</dbReference>
<dbReference type="PIR" id="C27058">
    <property type="entry name" value="C27058"/>
</dbReference>
<dbReference type="PDB" id="1GGV">
    <property type="method" value="X-ray"/>
    <property type="resolution" value="2.50 A"/>
    <property type="chains" value="A=1-232"/>
</dbReference>
<dbReference type="PDB" id="1ZI6">
    <property type="method" value="X-ray"/>
    <property type="resolution" value="1.70 A"/>
    <property type="chains" value="A=1-236"/>
</dbReference>
<dbReference type="PDB" id="1ZI8">
    <property type="method" value="X-ray"/>
    <property type="resolution" value="1.40 A"/>
    <property type="chains" value="A=1-236"/>
</dbReference>
<dbReference type="PDB" id="1ZI9">
    <property type="method" value="X-ray"/>
    <property type="resolution" value="1.50 A"/>
    <property type="chains" value="A=1-236"/>
</dbReference>
<dbReference type="PDB" id="1ZIC">
    <property type="method" value="X-ray"/>
    <property type="resolution" value="1.70 A"/>
    <property type="chains" value="A=1-236"/>
</dbReference>
<dbReference type="PDB" id="1ZIX">
    <property type="method" value="X-ray"/>
    <property type="resolution" value="1.80 A"/>
    <property type="chains" value="A=1-236"/>
</dbReference>
<dbReference type="PDB" id="1ZIY">
    <property type="method" value="X-ray"/>
    <property type="resolution" value="1.90 A"/>
    <property type="chains" value="A=1-236"/>
</dbReference>
<dbReference type="PDB" id="1ZJ4">
    <property type="method" value="X-ray"/>
    <property type="resolution" value="1.70 A"/>
    <property type="chains" value="A=1-236"/>
</dbReference>
<dbReference type="PDB" id="1ZJ5">
    <property type="method" value="X-ray"/>
    <property type="resolution" value="1.70 A"/>
    <property type="chains" value="A=1-236"/>
</dbReference>
<dbReference type="PDB" id="4P92">
    <property type="method" value="X-ray"/>
    <property type="resolution" value="1.65 A"/>
    <property type="chains" value="A=1-236"/>
</dbReference>
<dbReference type="PDBsum" id="1GGV"/>
<dbReference type="PDBsum" id="1ZI6"/>
<dbReference type="PDBsum" id="1ZI8"/>
<dbReference type="PDBsum" id="1ZI9"/>
<dbReference type="PDBsum" id="1ZIC"/>
<dbReference type="PDBsum" id="1ZIX"/>
<dbReference type="PDBsum" id="1ZIY"/>
<dbReference type="PDBsum" id="1ZJ4"/>
<dbReference type="PDBsum" id="1ZJ5"/>
<dbReference type="PDBsum" id="4P92"/>
<dbReference type="SMR" id="P0A114"/>
<dbReference type="ESTHER" id="psepu-clcd1">
    <property type="family name" value="Dienelactone_hydrolase"/>
</dbReference>
<dbReference type="UniPathway" id="UPA00083"/>
<dbReference type="EvolutionaryTrace" id="P0A114"/>
<dbReference type="GO" id="GO:0008806">
    <property type="term" value="F:carboxymethylenebutenolidase activity"/>
    <property type="evidence" value="ECO:0007669"/>
    <property type="project" value="UniProtKB-EC"/>
</dbReference>
<dbReference type="GO" id="GO:0009056">
    <property type="term" value="P:catabolic process"/>
    <property type="evidence" value="ECO:0007669"/>
    <property type="project" value="UniProtKB-KW"/>
</dbReference>
<dbReference type="Gene3D" id="3.40.50.1820">
    <property type="entry name" value="alpha/beta hydrolase"/>
    <property type="match status" value="1"/>
</dbReference>
<dbReference type="InterPro" id="IPR029058">
    <property type="entry name" value="AB_hydrolase_fold"/>
</dbReference>
<dbReference type="InterPro" id="IPR002925">
    <property type="entry name" value="Dienelactn_hydro"/>
</dbReference>
<dbReference type="InterPro" id="IPR051049">
    <property type="entry name" value="Dienelactone_hydrolase-like"/>
</dbReference>
<dbReference type="PANTHER" id="PTHR46623:SF6">
    <property type="entry name" value="ALPHA_BETA-HYDROLASES SUPERFAMILY PROTEIN"/>
    <property type="match status" value="1"/>
</dbReference>
<dbReference type="PANTHER" id="PTHR46623">
    <property type="entry name" value="CARBOXYMETHYLENEBUTENOLIDASE-RELATED"/>
    <property type="match status" value="1"/>
</dbReference>
<dbReference type="Pfam" id="PF01738">
    <property type="entry name" value="DLH"/>
    <property type="match status" value="1"/>
</dbReference>
<dbReference type="SUPFAM" id="SSF53474">
    <property type="entry name" value="alpha/beta-Hydrolases"/>
    <property type="match status" value="1"/>
</dbReference>
<organism>
    <name type="scientific">Pseudomonas putida</name>
    <name type="common">Arthrobacter siderocapsulatus</name>
    <dbReference type="NCBI Taxonomy" id="303"/>
    <lineage>
        <taxon>Bacteria</taxon>
        <taxon>Pseudomonadati</taxon>
        <taxon>Pseudomonadota</taxon>
        <taxon>Gammaproteobacteria</taxon>
        <taxon>Pseudomonadales</taxon>
        <taxon>Pseudomonadaceae</taxon>
        <taxon>Pseudomonas</taxon>
    </lineage>
</organism>